<name>NQRA_SHEDO</name>
<feature type="chain" id="PRO_1000060129" description="Na(+)-translocating NADH-quinone reductase subunit A">
    <location>
        <begin position="1"/>
        <end position="444"/>
    </location>
</feature>
<organism>
    <name type="scientific">Shewanella denitrificans (strain OS217 / ATCC BAA-1090 / DSM 15013)</name>
    <dbReference type="NCBI Taxonomy" id="318161"/>
    <lineage>
        <taxon>Bacteria</taxon>
        <taxon>Pseudomonadati</taxon>
        <taxon>Pseudomonadota</taxon>
        <taxon>Gammaproteobacteria</taxon>
        <taxon>Alteromonadales</taxon>
        <taxon>Shewanellaceae</taxon>
        <taxon>Shewanella</taxon>
    </lineage>
</organism>
<proteinExistence type="inferred from homology"/>
<sequence length="444" mass="47559">MITIKKGLELPITGGPEQVIHNGPAINHVATLGEEYIGLRPTMKIKVGDKVQKGQVLFEDKKNLGVKYTALASGTILEINRGAKRVLQSVVIAVEGDDSVAFSKHDAGSLATLDAQLVRTNLIDSGLWTALRTRPFSKVPAVDATAAGIFVTAIDTQPLAADPAVVIAEHKDDFANGLTLLAKLTEGKVFLCKAPGADIPAANAQVEEFAGIHPAGLVGTHIHNLLPASAKRSVWHIGYQDVIAIGQLFTQGVLNTERVFAIGGPKAKKPRLVRSRLGASLVELMADETQAGDVRVISGSVLNGRTAAGVHAYAGRYHQQITVLEEGREQEFFGWAMPGGDKFSITRSFLSHLSPSRLFNMTTSTGGSERAMVPIGNYERVVPLDVLPTLLLRDLLSGDFDSAVTLGALELDEEDLALCTFVCPGKYDYGSYLRDCLDTIEREG</sequence>
<keyword id="KW-0406">Ion transport</keyword>
<keyword id="KW-0520">NAD</keyword>
<keyword id="KW-1185">Reference proteome</keyword>
<keyword id="KW-0915">Sodium</keyword>
<keyword id="KW-0739">Sodium transport</keyword>
<keyword id="KW-1278">Translocase</keyword>
<keyword id="KW-0813">Transport</keyword>
<keyword id="KW-0830">Ubiquinone</keyword>
<protein>
    <recommendedName>
        <fullName evidence="1">Na(+)-translocating NADH-quinone reductase subunit A</fullName>
        <shortName evidence="1">Na(+)-NQR subunit A</shortName>
        <shortName evidence="1">Na(+)-translocating NQR subunit A</shortName>
        <ecNumber evidence="1">7.2.1.1</ecNumber>
    </recommendedName>
    <alternativeName>
        <fullName evidence="1">NQR complex subunit A</fullName>
    </alternativeName>
    <alternativeName>
        <fullName evidence="1">NQR-1 subunit A</fullName>
    </alternativeName>
</protein>
<reference key="1">
    <citation type="submission" date="2006-03" db="EMBL/GenBank/DDBJ databases">
        <title>Complete sequence of Shewanella denitrificans OS217.</title>
        <authorList>
            <consortium name="US DOE Joint Genome Institute"/>
            <person name="Copeland A."/>
            <person name="Lucas S."/>
            <person name="Lapidus A."/>
            <person name="Barry K."/>
            <person name="Detter J.C."/>
            <person name="Glavina del Rio T."/>
            <person name="Hammon N."/>
            <person name="Israni S."/>
            <person name="Dalin E."/>
            <person name="Tice H."/>
            <person name="Pitluck S."/>
            <person name="Brettin T."/>
            <person name="Bruce D."/>
            <person name="Han C."/>
            <person name="Tapia R."/>
            <person name="Gilna P."/>
            <person name="Kiss H."/>
            <person name="Schmutz J."/>
            <person name="Larimer F."/>
            <person name="Land M."/>
            <person name="Hauser L."/>
            <person name="Kyrpides N."/>
            <person name="Lykidis A."/>
            <person name="Richardson P."/>
        </authorList>
    </citation>
    <scope>NUCLEOTIDE SEQUENCE [LARGE SCALE GENOMIC DNA]</scope>
    <source>
        <strain>OS217 / ATCC BAA-1090 / DSM 15013</strain>
    </source>
</reference>
<accession>Q12QK6</accession>
<comment type="function">
    <text evidence="1">NQR complex catalyzes the reduction of ubiquinone-1 to ubiquinol by two successive reactions, coupled with the transport of Na(+) ions from the cytoplasm to the periplasm. NqrA to NqrE are probably involved in the second step, the conversion of ubisemiquinone to ubiquinol.</text>
</comment>
<comment type="catalytic activity">
    <reaction evidence="1">
        <text>a ubiquinone + n Na(+)(in) + NADH + H(+) = a ubiquinol + n Na(+)(out) + NAD(+)</text>
        <dbReference type="Rhea" id="RHEA:47748"/>
        <dbReference type="Rhea" id="RHEA-COMP:9565"/>
        <dbReference type="Rhea" id="RHEA-COMP:9566"/>
        <dbReference type="ChEBI" id="CHEBI:15378"/>
        <dbReference type="ChEBI" id="CHEBI:16389"/>
        <dbReference type="ChEBI" id="CHEBI:17976"/>
        <dbReference type="ChEBI" id="CHEBI:29101"/>
        <dbReference type="ChEBI" id="CHEBI:57540"/>
        <dbReference type="ChEBI" id="CHEBI:57945"/>
        <dbReference type="EC" id="7.2.1.1"/>
    </reaction>
</comment>
<comment type="subunit">
    <text evidence="1">Composed of six subunits; NqrA, NqrB, NqrC, NqrD, NqrE and NqrF.</text>
</comment>
<comment type="similarity">
    <text evidence="1">Belongs to the NqrA family.</text>
</comment>
<dbReference type="EC" id="7.2.1.1" evidence="1"/>
<dbReference type="EMBL" id="CP000302">
    <property type="protein sequence ID" value="ABE54270.1"/>
    <property type="molecule type" value="Genomic_DNA"/>
</dbReference>
<dbReference type="RefSeq" id="WP_011495434.1">
    <property type="nucleotide sequence ID" value="NC_007954.1"/>
</dbReference>
<dbReference type="SMR" id="Q12QK6"/>
<dbReference type="STRING" id="318161.Sden_0982"/>
<dbReference type="KEGG" id="sdn:Sden_0982"/>
<dbReference type="eggNOG" id="COG1726">
    <property type="taxonomic scope" value="Bacteria"/>
</dbReference>
<dbReference type="HOGENOM" id="CLU_046656_0_0_6"/>
<dbReference type="OrthoDB" id="9774536at2"/>
<dbReference type="Proteomes" id="UP000001982">
    <property type="component" value="Chromosome"/>
</dbReference>
<dbReference type="GO" id="GO:0016655">
    <property type="term" value="F:oxidoreductase activity, acting on NAD(P)H, quinone or similar compound as acceptor"/>
    <property type="evidence" value="ECO:0007669"/>
    <property type="project" value="UniProtKB-UniRule"/>
</dbReference>
<dbReference type="GO" id="GO:0006814">
    <property type="term" value="P:sodium ion transport"/>
    <property type="evidence" value="ECO:0007669"/>
    <property type="project" value="UniProtKB-UniRule"/>
</dbReference>
<dbReference type="HAMAP" id="MF_00425">
    <property type="entry name" value="NqrA"/>
    <property type="match status" value="1"/>
</dbReference>
<dbReference type="InterPro" id="IPR008703">
    <property type="entry name" value="NqrA"/>
</dbReference>
<dbReference type="InterPro" id="IPR056148">
    <property type="entry name" value="NQRA_2nd"/>
</dbReference>
<dbReference type="InterPro" id="IPR022615">
    <property type="entry name" value="NqrA_C_domain"/>
</dbReference>
<dbReference type="InterPro" id="IPR056147">
    <property type="entry name" value="NQRA_N"/>
</dbReference>
<dbReference type="NCBIfam" id="TIGR01936">
    <property type="entry name" value="nqrA"/>
    <property type="match status" value="1"/>
</dbReference>
<dbReference type="NCBIfam" id="NF003759">
    <property type="entry name" value="PRK05352.1-2"/>
    <property type="match status" value="1"/>
</dbReference>
<dbReference type="NCBIfam" id="NF003762">
    <property type="entry name" value="PRK05352.1-5"/>
    <property type="match status" value="1"/>
</dbReference>
<dbReference type="PANTHER" id="PTHR37839">
    <property type="entry name" value="NA(+)-TRANSLOCATING NADH-QUINONE REDUCTASE SUBUNIT A"/>
    <property type="match status" value="1"/>
</dbReference>
<dbReference type="PANTHER" id="PTHR37839:SF1">
    <property type="entry name" value="NA(+)-TRANSLOCATING NADH-QUINONE REDUCTASE SUBUNIT A"/>
    <property type="match status" value="1"/>
</dbReference>
<dbReference type="Pfam" id="PF24836">
    <property type="entry name" value="NQRA_2nd"/>
    <property type="match status" value="1"/>
</dbReference>
<dbReference type="Pfam" id="PF05896">
    <property type="entry name" value="NQRA_N"/>
    <property type="match status" value="1"/>
</dbReference>
<dbReference type="Pfam" id="PF11973">
    <property type="entry name" value="NQRA_SLBB"/>
    <property type="match status" value="1"/>
</dbReference>
<evidence type="ECO:0000255" key="1">
    <source>
        <dbReference type="HAMAP-Rule" id="MF_00425"/>
    </source>
</evidence>
<gene>
    <name evidence="1" type="primary">nqrA</name>
    <name type="ordered locus">Sden_0982</name>
</gene>